<organism>
    <name type="scientific">Rhodopseudomonas palustris (strain ATCC BAA-98 / CGA009)</name>
    <dbReference type="NCBI Taxonomy" id="258594"/>
    <lineage>
        <taxon>Bacteria</taxon>
        <taxon>Pseudomonadati</taxon>
        <taxon>Pseudomonadota</taxon>
        <taxon>Alphaproteobacteria</taxon>
        <taxon>Hyphomicrobiales</taxon>
        <taxon>Nitrobacteraceae</taxon>
        <taxon>Rhodopseudomonas</taxon>
    </lineage>
</organism>
<comment type="function">
    <text evidence="1">Part of the ABC transporter complex UgpBAEC involved in sn-glycerol-3-phosphate (G3P) import. Responsible for energy coupling to the transport system.</text>
</comment>
<comment type="catalytic activity">
    <reaction evidence="1">
        <text>sn-glycerol 3-phosphate(out) + ATP + H2O = sn-glycerol 3-phosphate(in) + ADP + phosphate + H(+)</text>
        <dbReference type="Rhea" id="RHEA:21668"/>
        <dbReference type="ChEBI" id="CHEBI:15377"/>
        <dbReference type="ChEBI" id="CHEBI:15378"/>
        <dbReference type="ChEBI" id="CHEBI:30616"/>
        <dbReference type="ChEBI" id="CHEBI:43474"/>
        <dbReference type="ChEBI" id="CHEBI:57597"/>
        <dbReference type="ChEBI" id="CHEBI:456216"/>
        <dbReference type="EC" id="7.6.2.10"/>
    </reaction>
</comment>
<comment type="subunit">
    <text evidence="1">The complex is composed of two ATP-binding proteins (UgpC), two transmembrane proteins (UgpA and UgpE) and a solute-binding protein (UgpB).</text>
</comment>
<comment type="subcellular location">
    <subcellularLocation>
        <location evidence="1">Cell inner membrane</location>
        <topology evidence="1">Peripheral membrane protein</topology>
    </subcellularLocation>
</comment>
<comment type="similarity">
    <text evidence="1">Belongs to the ABC transporter superfamily. sn-glycerol-3-phosphate importer (TC 3.A.1.1.3) family.</text>
</comment>
<keyword id="KW-0067">ATP-binding</keyword>
<keyword id="KW-0997">Cell inner membrane</keyword>
<keyword id="KW-1003">Cell membrane</keyword>
<keyword id="KW-0472">Membrane</keyword>
<keyword id="KW-0547">Nucleotide-binding</keyword>
<keyword id="KW-0762">Sugar transport</keyword>
<keyword id="KW-1278">Translocase</keyword>
<keyword id="KW-0813">Transport</keyword>
<protein>
    <recommendedName>
        <fullName evidence="1">sn-glycerol-3-phosphate import ATP-binding protein UgpC</fullName>
        <ecNumber evidence="1">7.6.2.10</ecNumber>
    </recommendedName>
</protein>
<name>UGPC_RHOPA</name>
<feature type="chain" id="PRO_0000289772" description="sn-glycerol-3-phosphate import ATP-binding protein UgpC">
    <location>
        <begin position="1"/>
        <end position="363"/>
    </location>
</feature>
<feature type="domain" description="ABC transporter" evidence="1">
    <location>
        <begin position="4"/>
        <end position="235"/>
    </location>
</feature>
<feature type="binding site" evidence="1">
    <location>
        <begin position="37"/>
        <end position="44"/>
    </location>
    <ligand>
        <name>ATP</name>
        <dbReference type="ChEBI" id="CHEBI:30616"/>
    </ligand>
</feature>
<accession>Q6NDQ0</accession>
<reference key="1">
    <citation type="journal article" date="2004" name="Nat. Biotechnol.">
        <title>Complete genome sequence of the metabolically versatile photosynthetic bacterium Rhodopseudomonas palustris.</title>
        <authorList>
            <person name="Larimer F.W."/>
            <person name="Chain P."/>
            <person name="Hauser L."/>
            <person name="Lamerdin J.E."/>
            <person name="Malfatti S."/>
            <person name="Do L."/>
            <person name="Land M.L."/>
            <person name="Pelletier D.A."/>
            <person name="Beatty J.T."/>
            <person name="Lang A.S."/>
            <person name="Tabita F.R."/>
            <person name="Gibson J.L."/>
            <person name="Hanson T.E."/>
            <person name="Bobst C."/>
            <person name="Torres y Torres J.L."/>
            <person name="Peres C."/>
            <person name="Harrison F.H."/>
            <person name="Gibson J."/>
            <person name="Harwood C.S."/>
        </authorList>
    </citation>
    <scope>NUCLEOTIDE SEQUENCE [LARGE SCALE GENOMIC DNA]</scope>
    <source>
        <strain>ATCC BAA-98 / CGA009</strain>
    </source>
</reference>
<sequence length="363" mass="38712">MADVVLRNVRKTYPGGFEAIKGVDFAVGDGQFCVLVGPSGCGKSTLLRMVAGLETITAGEIEIGGRVVNDVEPADRDIAMVFQNYALYPHMTVYNNMAYGLRNRGMAKAEIDARVQEAARILELGPMLIRKPRQLSGGQRQRVAMGRAIVRHPKVFLFDEPLSNLDAKLRVAMRVEIRKLQRRLATTAIYVTHDQLEAMTLADVLVVMNGGQVEQIGSPLDVYAKPATTFVASFIGAPPMNLLTLAHDLRSQLSGAPPEAGILGVRPEDLVIGPGTAAQGGLALDITVEAIERVGPETFVYGVRAGHEARPVVAGKPGEGAGGDVIVRIPGQAAPPVGERITVVAPPHGLHLFSADGRRRIAG</sequence>
<gene>
    <name evidence="1" type="primary">ugpC</name>
    <name type="ordered locus">RPA0055</name>
</gene>
<proteinExistence type="inferred from homology"/>
<evidence type="ECO:0000255" key="1">
    <source>
        <dbReference type="HAMAP-Rule" id="MF_01727"/>
    </source>
</evidence>
<dbReference type="EC" id="7.6.2.10" evidence="1"/>
<dbReference type="EMBL" id="BX572593">
    <property type="protein sequence ID" value="CAE25499.1"/>
    <property type="molecule type" value="Genomic_DNA"/>
</dbReference>
<dbReference type="RefSeq" id="WP_011155626.1">
    <property type="nucleotide sequence ID" value="NZ_CP116810.1"/>
</dbReference>
<dbReference type="SMR" id="Q6NDQ0"/>
<dbReference type="STRING" id="258594.RPA0055"/>
<dbReference type="GeneID" id="66891055"/>
<dbReference type="eggNOG" id="COG3842">
    <property type="taxonomic scope" value="Bacteria"/>
</dbReference>
<dbReference type="HOGENOM" id="CLU_000604_1_1_5"/>
<dbReference type="PhylomeDB" id="Q6NDQ0"/>
<dbReference type="GO" id="GO:0055052">
    <property type="term" value="C:ATP-binding cassette (ABC) transporter complex, substrate-binding subunit-containing"/>
    <property type="evidence" value="ECO:0007669"/>
    <property type="project" value="TreeGrafter"/>
</dbReference>
<dbReference type="GO" id="GO:0015430">
    <property type="term" value="F:ABC-type glycerol-3-phosphate transporter activity"/>
    <property type="evidence" value="ECO:0007669"/>
    <property type="project" value="UniProtKB-EC"/>
</dbReference>
<dbReference type="GO" id="GO:0005524">
    <property type="term" value="F:ATP binding"/>
    <property type="evidence" value="ECO:0007669"/>
    <property type="project" value="UniProtKB-KW"/>
</dbReference>
<dbReference type="GO" id="GO:0016887">
    <property type="term" value="F:ATP hydrolysis activity"/>
    <property type="evidence" value="ECO:0007669"/>
    <property type="project" value="InterPro"/>
</dbReference>
<dbReference type="GO" id="GO:0008643">
    <property type="term" value="P:carbohydrate transport"/>
    <property type="evidence" value="ECO:0007669"/>
    <property type="project" value="InterPro"/>
</dbReference>
<dbReference type="GO" id="GO:0001407">
    <property type="term" value="P:glycerophosphodiester transmembrane transport"/>
    <property type="evidence" value="ECO:0007669"/>
    <property type="project" value="TreeGrafter"/>
</dbReference>
<dbReference type="CDD" id="cd03301">
    <property type="entry name" value="ABC_MalK_N"/>
    <property type="match status" value="1"/>
</dbReference>
<dbReference type="FunFam" id="3.40.50.300:FF:000042">
    <property type="entry name" value="Maltose/maltodextrin ABC transporter, ATP-binding protein"/>
    <property type="match status" value="1"/>
</dbReference>
<dbReference type="Gene3D" id="2.40.50.100">
    <property type="match status" value="2"/>
</dbReference>
<dbReference type="Gene3D" id="2.40.50.140">
    <property type="entry name" value="Nucleic acid-binding proteins"/>
    <property type="match status" value="1"/>
</dbReference>
<dbReference type="Gene3D" id="3.40.50.300">
    <property type="entry name" value="P-loop containing nucleotide triphosphate hydrolases"/>
    <property type="match status" value="1"/>
</dbReference>
<dbReference type="InterPro" id="IPR003593">
    <property type="entry name" value="AAA+_ATPase"/>
</dbReference>
<dbReference type="InterPro" id="IPR003439">
    <property type="entry name" value="ABC_transporter-like_ATP-bd"/>
</dbReference>
<dbReference type="InterPro" id="IPR017871">
    <property type="entry name" value="ABC_transporter-like_CS"/>
</dbReference>
<dbReference type="InterPro" id="IPR015855">
    <property type="entry name" value="ABC_transpr_MalK-like"/>
</dbReference>
<dbReference type="InterPro" id="IPR047641">
    <property type="entry name" value="ABC_transpr_MalK/UgpC-like"/>
</dbReference>
<dbReference type="InterPro" id="IPR008995">
    <property type="entry name" value="Mo/tungstate-bd_C_term_dom"/>
</dbReference>
<dbReference type="InterPro" id="IPR012340">
    <property type="entry name" value="NA-bd_OB-fold"/>
</dbReference>
<dbReference type="InterPro" id="IPR027417">
    <property type="entry name" value="P-loop_NTPase"/>
</dbReference>
<dbReference type="NCBIfam" id="NF008653">
    <property type="entry name" value="PRK11650.1"/>
    <property type="match status" value="1"/>
</dbReference>
<dbReference type="PANTHER" id="PTHR43875">
    <property type="entry name" value="MALTODEXTRIN IMPORT ATP-BINDING PROTEIN MSMX"/>
    <property type="match status" value="1"/>
</dbReference>
<dbReference type="PANTHER" id="PTHR43875:SF12">
    <property type="entry name" value="SN-GLYCEROL-3-PHOSPHATE IMPORT ATP-BINDING PROTEIN UGPC"/>
    <property type="match status" value="1"/>
</dbReference>
<dbReference type="Pfam" id="PF00005">
    <property type="entry name" value="ABC_tran"/>
    <property type="match status" value="1"/>
</dbReference>
<dbReference type="SMART" id="SM00382">
    <property type="entry name" value="AAA"/>
    <property type="match status" value="1"/>
</dbReference>
<dbReference type="SUPFAM" id="SSF50331">
    <property type="entry name" value="MOP-like"/>
    <property type="match status" value="1"/>
</dbReference>
<dbReference type="SUPFAM" id="SSF52540">
    <property type="entry name" value="P-loop containing nucleoside triphosphate hydrolases"/>
    <property type="match status" value="1"/>
</dbReference>
<dbReference type="PROSITE" id="PS00211">
    <property type="entry name" value="ABC_TRANSPORTER_1"/>
    <property type="match status" value="1"/>
</dbReference>
<dbReference type="PROSITE" id="PS50893">
    <property type="entry name" value="ABC_TRANSPORTER_2"/>
    <property type="match status" value="1"/>
</dbReference>
<dbReference type="PROSITE" id="PS51315">
    <property type="entry name" value="UGPC"/>
    <property type="match status" value="1"/>
</dbReference>